<gene>
    <name evidence="1" type="primary">ureF</name>
    <name type="ordered locus">Bxeno_A0755</name>
    <name type="ORF">Bxe_A3696</name>
</gene>
<protein>
    <recommendedName>
        <fullName evidence="1">Urease accessory protein UreF</fullName>
    </recommendedName>
</protein>
<keyword id="KW-0143">Chaperone</keyword>
<keyword id="KW-0963">Cytoplasm</keyword>
<keyword id="KW-0996">Nickel insertion</keyword>
<keyword id="KW-1185">Reference proteome</keyword>
<reference key="1">
    <citation type="journal article" date="2006" name="Proc. Natl. Acad. Sci. U.S.A.">
        <title>Burkholderia xenovorans LB400 harbors a multi-replicon, 9.73-Mbp genome shaped for versatility.</title>
        <authorList>
            <person name="Chain P.S.G."/>
            <person name="Denef V.J."/>
            <person name="Konstantinidis K.T."/>
            <person name="Vergez L.M."/>
            <person name="Agullo L."/>
            <person name="Reyes V.L."/>
            <person name="Hauser L."/>
            <person name="Cordova M."/>
            <person name="Gomez L."/>
            <person name="Gonzalez M."/>
            <person name="Land M."/>
            <person name="Lao V."/>
            <person name="Larimer F."/>
            <person name="LiPuma J.J."/>
            <person name="Mahenthiralingam E."/>
            <person name="Malfatti S.A."/>
            <person name="Marx C.J."/>
            <person name="Parnell J.J."/>
            <person name="Ramette A."/>
            <person name="Richardson P."/>
            <person name="Seeger M."/>
            <person name="Smith D."/>
            <person name="Spilker T."/>
            <person name="Sul W.J."/>
            <person name="Tsoi T.V."/>
            <person name="Ulrich L.E."/>
            <person name="Zhulin I.B."/>
            <person name="Tiedje J.M."/>
        </authorList>
    </citation>
    <scope>NUCLEOTIDE SEQUENCE [LARGE SCALE GENOMIC DNA]</scope>
    <source>
        <strain>LB400</strain>
    </source>
</reference>
<comment type="function">
    <text evidence="1">Required for maturation of urease via the functional incorporation of the urease nickel metallocenter.</text>
</comment>
<comment type="subunit">
    <text evidence="1">UreD, UreF and UreG form a complex that acts as a GTP-hydrolysis-dependent molecular chaperone, activating the urease apoprotein by helping to assemble the nickel containing metallocenter of UreC. The UreE protein probably delivers the nickel.</text>
</comment>
<comment type="subcellular location">
    <subcellularLocation>
        <location evidence="1">Cytoplasm</location>
    </subcellularLocation>
</comment>
<comment type="similarity">
    <text evidence="1">Belongs to the UreF family.</text>
</comment>
<feature type="chain" id="PRO_0000344111" description="Urease accessory protein UreF">
    <location>
        <begin position="1"/>
        <end position="226"/>
    </location>
</feature>
<name>UREF_PARXL</name>
<organism>
    <name type="scientific">Paraburkholderia xenovorans (strain LB400)</name>
    <dbReference type="NCBI Taxonomy" id="266265"/>
    <lineage>
        <taxon>Bacteria</taxon>
        <taxon>Pseudomonadati</taxon>
        <taxon>Pseudomonadota</taxon>
        <taxon>Betaproteobacteria</taxon>
        <taxon>Burkholderiales</taxon>
        <taxon>Burkholderiaceae</taxon>
        <taxon>Paraburkholderia</taxon>
    </lineage>
</organism>
<evidence type="ECO:0000255" key="1">
    <source>
        <dbReference type="HAMAP-Rule" id="MF_01385"/>
    </source>
</evidence>
<dbReference type="EMBL" id="CP000270">
    <property type="protein sequence ID" value="ABE29293.1"/>
    <property type="molecule type" value="Genomic_DNA"/>
</dbReference>
<dbReference type="RefSeq" id="WP_007175994.1">
    <property type="nucleotide sequence ID" value="NC_007951.1"/>
</dbReference>
<dbReference type="SMR" id="Q144E6"/>
<dbReference type="STRING" id="266265.Bxe_A3696"/>
<dbReference type="KEGG" id="bxb:DR64_1388"/>
<dbReference type="KEGG" id="bxe:Bxe_A3696"/>
<dbReference type="eggNOG" id="COG0830">
    <property type="taxonomic scope" value="Bacteria"/>
</dbReference>
<dbReference type="OrthoDB" id="9798772at2"/>
<dbReference type="Proteomes" id="UP000001817">
    <property type="component" value="Chromosome 1"/>
</dbReference>
<dbReference type="GO" id="GO:0005737">
    <property type="term" value="C:cytoplasm"/>
    <property type="evidence" value="ECO:0007669"/>
    <property type="project" value="UniProtKB-SubCell"/>
</dbReference>
<dbReference type="GO" id="GO:0016151">
    <property type="term" value="F:nickel cation binding"/>
    <property type="evidence" value="ECO:0007669"/>
    <property type="project" value="UniProtKB-UniRule"/>
</dbReference>
<dbReference type="Gene3D" id="1.10.4190.10">
    <property type="entry name" value="Urease accessory protein UreF"/>
    <property type="match status" value="1"/>
</dbReference>
<dbReference type="HAMAP" id="MF_01385">
    <property type="entry name" value="UreF"/>
    <property type="match status" value="1"/>
</dbReference>
<dbReference type="InterPro" id="IPR002639">
    <property type="entry name" value="UreF"/>
</dbReference>
<dbReference type="InterPro" id="IPR038277">
    <property type="entry name" value="UreF_sf"/>
</dbReference>
<dbReference type="PANTHER" id="PTHR33620">
    <property type="entry name" value="UREASE ACCESSORY PROTEIN F"/>
    <property type="match status" value="1"/>
</dbReference>
<dbReference type="PANTHER" id="PTHR33620:SF1">
    <property type="entry name" value="UREASE ACCESSORY PROTEIN F"/>
    <property type="match status" value="1"/>
</dbReference>
<dbReference type="Pfam" id="PF01730">
    <property type="entry name" value="UreF"/>
    <property type="match status" value="1"/>
</dbReference>
<dbReference type="PIRSF" id="PIRSF009467">
    <property type="entry name" value="Ureas_acces_UreF"/>
    <property type="match status" value="1"/>
</dbReference>
<accession>Q144E6</accession>
<proteinExistence type="inferred from homology"/>
<sequence>MRIAELTALLHLASPALPIGAFSYSQGLEAAIEAQLITDADSAREWIASGLTDVLARGELPFLAHQMERWRTHDAESLRVANSEFLASRESAELRRETEQMGWSLRQLCVSLEWGDADRRATLASMTPLAQPTAFAFAAYAHDAAVDATLAAYAFSWVENQAAAALKAVPLGQLAGQRIIVALREPIDAAVTRALATSPDNINTFAPQLGILSARHESQYSRLFRS</sequence>